<organism>
    <name type="scientific">Bacteroides thetaiotaomicron (strain ATCC 29148 / DSM 2079 / JCM 5827 / CCUG 10774 / NCTC 10582 / VPI-5482 / E50)</name>
    <dbReference type="NCBI Taxonomy" id="226186"/>
    <lineage>
        <taxon>Bacteria</taxon>
        <taxon>Pseudomonadati</taxon>
        <taxon>Bacteroidota</taxon>
        <taxon>Bacteroidia</taxon>
        <taxon>Bacteroidales</taxon>
        <taxon>Bacteroidaceae</taxon>
        <taxon>Bacteroides</taxon>
    </lineage>
</organism>
<proteinExistence type="inferred from homology"/>
<accession>Q8A8D8</accession>
<sequence length="555" mass="59617">MEWLYNLFLEHSALQAVVVLSLISAIGLGLGRVHFWGVSLGVTFVFFAGILAGHFGLSVDPQMLNYAESFGLVIFVYSLGLQVGPGFFSSFRKGGVTLNMLALAVVLLGTLLTVVASYATGVSLPDMVGILCGATTNTPALGAAQQTLKQMGIESSTPALGCAVAYPMGVIGVILAVLLIRKFLVHKEDLEIKEKDDANKTFIAAFQVHNPAIFNKSIKDIAQMSYPKFVISRLWRDGHVSIPTSDKVLKEGDRLLVITAEKNVLALTVLFGEQEENTDWNKEDIDWNAIDSELISQRIVVTRPELNGKKLGSLRLRNHYGINISRVYRSGVQLLATPELILQLGDRLTVVGEAAAIQNVEKVLGNAVKSLKEPNLVVIFIGIVLGLALGAIPFSIPGISTPVKLGLAGGPIIVGILLGTFGPRIHMITYTTRSANLMLRALGLSMYLACLGLDAGAHFFDTVFRPEGLLWIALGAGLTIIPTVLVGFVAFKIMKIDFGSVSGMLCGSMANPMALNYANDTIPGDNPSVAYATVYPLCMFLRVIIAQVLLMFLLG</sequence>
<gene>
    <name type="ordered locus">BT_1229</name>
</gene>
<feature type="chain" id="PRO_0000208754" description="Uncharacterized transporter BT_1229">
    <location>
        <begin position="1"/>
        <end position="555"/>
    </location>
</feature>
<feature type="transmembrane region" description="Helical" evidence="1">
    <location>
        <begin position="13"/>
        <end position="30"/>
    </location>
</feature>
<feature type="transmembrane region" description="Helical" evidence="1">
    <location>
        <begin position="35"/>
        <end position="57"/>
    </location>
</feature>
<feature type="transmembrane region" description="Helical" evidence="1">
    <location>
        <begin position="72"/>
        <end position="91"/>
    </location>
</feature>
<feature type="transmembrane region" description="Helical" evidence="1">
    <location>
        <begin position="98"/>
        <end position="120"/>
    </location>
</feature>
<feature type="transmembrane region" description="Helical" evidence="1">
    <location>
        <begin position="157"/>
        <end position="179"/>
    </location>
</feature>
<feature type="transmembrane region" description="Helical" evidence="1">
    <location>
        <begin position="376"/>
        <end position="398"/>
    </location>
</feature>
<feature type="transmembrane region" description="Helical" evidence="1">
    <location>
        <begin position="408"/>
        <end position="430"/>
    </location>
</feature>
<feature type="transmembrane region" description="Helical" evidence="1">
    <location>
        <begin position="437"/>
        <end position="459"/>
    </location>
</feature>
<feature type="transmembrane region" description="Helical" evidence="1">
    <location>
        <begin position="469"/>
        <end position="491"/>
    </location>
</feature>
<feature type="transmembrane region" description="Helical" evidence="1">
    <location>
        <begin position="498"/>
        <end position="517"/>
    </location>
</feature>
<feature type="transmembrane region" description="Helical" evidence="1">
    <location>
        <begin position="532"/>
        <end position="554"/>
    </location>
</feature>
<feature type="domain" description="RCK C-terminal 1" evidence="2">
    <location>
        <begin position="188"/>
        <end position="273"/>
    </location>
</feature>
<feature type="domain" description="RCK C-terminal 2" evidence="2">
    <location>
        <begin position="282"/>
        <end position="366"/>
    </location>
</feature>
<keyword id="KW-1003">Cell membrane</keyword>
<keyword id="KW-0472">Membrane</keyword>
<keyword id="KW-1185">Reference proteome</keyword>
<keyword id="KW-0677">Repeat</keyword>
<keyword id="KW-0812">Transmembrane</keyword>
<keyword id="KW-1133">Transmembrane helix</keyword>
<keyword id="KW-0813">Transport</keyword>
<comment type="subcellular location">
    <subcellularLocation>
        <location evidence="3">Cell membrane</location>
        <topology evidence="3">Multi-pass membrane protein</topology>
    </subcellularLocation>
</comment>
<comment type="similarity">
    <text evidence="3">Belongs to the AAE transporter (TC 2.A.81) family.</text>
</comment>
<name>Y1229_BACTN</name>
<reference key="1">
    <citation type="journal article" date="2003" name="Science">
        <title>A genomic view of the human-Bacteroides thetaiotaomicron symbiosis.</title>
        <authorList>
            <person name="Xu J."/>
            <person name="Bjursell M.K."/>
            <person name="Himrod J."/>
            <person name="Deng S."/>
            <person name="Carmichael L.K."/>
            <person name="Chiang H.C."/>
            <person name="Hooper L.V."/>
            <person name="Gordon J.I."/>
        </authorList>
    </citation>
    <scope>NUCLEOTIDE SEQUENCE [LARGE SCALE GENOMIC DNA]</scope>
    <source>
        <strain>ATCC 29148 / DSM 2079 / JCM 5827 / CCUG 10774 / NCTC 10582 / VPI-5482 / E50</strain>
    </source>
</reference>
<dbReference type="EMBL" id="AE015928">
    <property type="protein sequence ID" value="AAO76336.1"/>
    <property type="molecule type" value="Genomic_DNA"/>
</dbReference>
<dbReference type="RefSeq" id="NP_810142.1">
    <property type="nucleotide sequence ID" value="NC_004663.1"/>
</dbReference>
<dbReference type="RefSeq" id="WP_008763411.1">
    <property type="nucleotide sequence ID" value="NC_004663.1"/>
</dbReference>
<dbReference type="SMR" id="Q8A8D8"/>
<dbReference type="FunCoup" id="Q8A8D8">
    <property type="interactions" value="34"/>
</dbReference>
<dbReference type="STRING" id="226186.BT_1229"/>
<dbReference type="PaxDb" id="226186-BT_1229"/>
<dbReference type="EnsemblBacteria" id="AAO76336">
    <property type="protein sequence ID" value="AAO76336"/>
    <property type="gene ID" value="BT_1229"/>
</dbReference>
<dbReference type="GeneID" id="60927207"/>
<dbReference type="KEGG" id="bth:BT_1229"/>
<dbReference type="PATRIC" id="fig|226186.12.peg.1255"/>
<dbReference type="eggNOG" id="COG0490">
    <property type="taxonomic scope" value="Bacteria"/>
</dbReference>
<dbReference type="eggNOG" id="COG2985">
    <property type="taxonomic scope" value="Bacteria"/>
</dbReference>
<dbReference type="HOGENOM" id="CLU_035023_3_1_10"/>
<dbReference type="InParanoid" id="Q8A8D8"/>
<dbReference type="OrthoDB" id="9155749at2"/>
<dbReference type="Proteomes" id="UP000001414">
    <property type="component" value="Chromosome"/>
</dbReference>
<dbReference type="GO" id="GO:0005886">
    <property type="term" value="C:plasma membrane"/>
    <property type="evidence" value="ECO:0000318"/>
    <property type="project" value="GO_Central"/>
</dbReference>
<dbReference type="GO" id="GO:0008324">
    <property type="term" value="F:monoatomic cation transmembrane transporter activity"/>
    <property type="evidence" value="ECO:0007669"/>
    <property type="project" value="InterPro"/>
</dbReference>
<dbReference type="GO" id="GO:0006813">
    <property type="term" value="P:potassium ion transport"/>
    <property type="evidence" value="ECO:0007669"/>
    <property type="project" value="InterPro"/>
</dbReference>
<dbReference type="Gene3D" id="3.30.70.1450">
    <property type="entry name" value="Regulator of K+ conductance, C-terminal domain"/>
    <property type="match status" value="2"/>
</dbReference>
<dbReference type="InterPro" id="IPR050144">
    <property type="entry name" value="AAE_transporter"/>
</dbReference>
<dbReference type="InterPro" id="IPR006037">
    <property type="entry name" value="RCK_C"/>
</dbReference>
<dbReference type="InterPro" id="IPR036721">
    <property type="entry name" value="RCK_C_sf"/>
</dbReference>
<dbReference type="InterPro" id="IPR006512">
    <property type="entry name" value="YidE_YbjL"/>
</dbReference>
<dbReference type="NCBIfam" id="NF003007">
    <property type="entry name" value="PRK03818.1"/>
    <property type="match status" value="1"/>
</dbReference>
<dbReference type="NCBIfam" id="TIGR01625">
    <property type="entry name" value="YidE_YbjL_dupl"/>
    <property type="match status" value="2"/>
</dbReference>
<dbReference type="PANTHER" id="PTHR30445">
    <property type="entry name" value="K(+)_H(+) ANTIPORTER SUBUNIT KHTT"/>
    <property type="match status" value="1"/>
</dbReference>
<dbReference type="PANTHER" id="PTHR30445:SF3">
    <property type="entry name" value="TRANSPORT PROTEIN YIDE-RELATED"/>
    <property type="match status" value="1"/>
</dbReference>
<dbReference type="Pfam" id="PF06826">
    <property type="entry name" value="Asp-Al_Ex"/>
    <property type="match status" value="2"/>
</dbReference>
<dbReference type="Pfam" id="PF02080">
    <property type="entry name" value="TrkA_C"/>
    <property type="match status" value="2"/>
</dbReference>
<dbReference type="SUPFAM" id="SSF116726">
    <property type="entry name" value="TrkA C-terminal domain-like"/>
    <property type="match status" value="2"/>
</dbReference>
<dbReference type="PROSITE" id="PS51202">
    <property type="entry name" value="RCK_C"/>
    <property type="match status" value="2"/>
</dbReference>
<protein>
    <recommendedName>
        <fullName>Uncharacterized transporter BT_1229</fullName>
    </recommendedName>
</protein>
<evidence type="ECO:0000255" key="1"/>
<evidence type="ECO:0000255" key="2">
    <source>
        <dbReference type="PROSITE-ProRule" id="PRU00544"/>
    </source>
</evidence>
<evidence type="ECO:0000305" key="3"/>